<gene>
    <name evidence="1" type="primary">tauB</name>
    <name type="ordered locus">mlr4518</name>
</gene>
<name>TAUB_RHILO</name>
<feature type="chain" id="PRO_0000093015" description="Taurine import ATP-binding protein TauB">
    <location>
        <begin position="1"/>
        <end position="257"/>
    </location>
</feature>
<feature type="domain" description="ABC transporter" evidence="1">
    <location>
        <begin position="6"/>
        <end position="233"/>
    </location>
</feature>
<feature type="binding site" evidence="1">
    <location>
        <begin position="38"/>
        <end position="45"/>
    </location>
    <ligand>
        <name>ATP</name>
        <dbReference type="ChEBI" id="CHEBI:30616"/>
    </ligand>
</feature>
<comment type="function">
    <text evidence="1">Part of the ABC transporter complex TauABC involved in taurine import. Responsible for energy coupling to the transport system.</text>
</comment>
<comment type="catalytic activity">
    <reaction evidence="1">
        <text>taurine(out) + ATP + H2O = taurine(in) + ADP + phosphate + H(+)</text>
        <dbReference type="Rhea" id="RHEA:14613"/>
        <dbReference type="ChEBI" id="CHEBI:15377"/>
        <dbReference type="ChEBI" id="CHEBI:15378"/>
        <dbReference type="ChEBI" id="CHEBI:30616"/>
        <dbReference type="ChEBI" id="CHEBI:43474"/>
        <dbReference type="ChEBI" id="CHEBI:456216"/>
        <dbReference type="ChEBI" id="CHEBI:507393"/>
        <dbReference type="EC" id="7.6.2.7"/>
    </reaction>
</comment>
<comment type="subunit">
    <text evidence="1">The complex is composed of two ATP-binding proteins (TauB), two transmembrane proteins (TauC) and a solute-binding protein (TauA).</text>
</comment>
<comment type="subcellular location">
    <subcellularLocation>
        <location evidence="1">Cell inner membrane</location>
        <topology evidence="1">Peripheral membrane protein</topology>
    </subcellularLocation>
</comment>
<comment type="similarity">
    <text evidence="1">Belongs to the ABC transporter superfamily. Taurine importer (TC 3.A.1.17.1) family.</text>
</comment>
<sequence>MPHLVLDKISIHYDGQPAPAVERVSIDVAGDDFVVLVGRSGCGKTSLLNVAAGLVTPARGSATINGRPITAPGSDRAVVFQNDALFPWLTARENVAFALRLRGVRPAERARRADELLALVKLGDAGDKRIWELSGGMRQRVGLARALAAEPQFLLLDEPLGALDALTRERMQTTLLDLWTASHAGVLMVTHGIEEALVLATRIVVLAPGPGRVVRTFEPGFSRRYAAGEPIRAIKADPAFATARGELTDAIFEGETA</sequence>
<proteinExistence type="inferred from homology"/>
<protein>
    <recommendedName>
        <fullName evidence="1">Taurine import ATP-binding protein TauB</fullName>
        <ecNumber evidence="1">7.6.2.7</ecNumber>
    </recommendedName>
</protein>
<keyword id="KW-0067">ATP-binding</keyword>
<keyword id="KW-0997">Cell inner membrane</keyword>
<keyword id="KW-1003">Cell membrane</keyword>
<keyword id="KW-0472">Membrane</keyword>
<keyword id="KW-0547">Nucleotide-binding</keyword>
<keyword id="KW-1278">Translocase</keyword>
<keyword id="KW-0813">Transport</keyword>
<accession>Q98DW6</accession>
<organism>
    <name type="scientific">Mesorhizobium japonicum (strain LMG 29417 / CECT 9101 / MAFF 303099)</name>
    <name type="common">Mesorhizobium loti (strain MAFF 303099)</name>
    <dbReference type="NCBI Taxonomy" id="266835"/>
    <lineage>
        <taxon>Bacteria</taxon>
        <taxon>Pseudomonadati</taxon>
        <taxon>Pseudomonadota</taxon>
        <taxon>Alphaproteobacteria</taxon>
        <taxon>Hyphomicrobiales</taxon>
        <taxon>Phyllobacteriaceae</taxon>
        <taxon>Mesorhizobium</taxon>
    </lineage>
</organism>
<reference key="1">
    <citation type="journal article" date="2000" name="DNA Res.">
        <title>Complete genome structure of the nitrogen-fixing symbiotic bacterium Mesorhizobium loti.</title>
        <authorList>
            <person name="Kaneko T."/>
            <person name="Nakamura Y."/>
            <person name="Sato S."/>
            <person name="Asamizu E."/>
            <person name="Kato T."/>
            <person name="Sasamoto S."/>
            <person name="Watanabe A."/>
            <person name="Idesawa K."/>
            <person name="Ishikawa A."/>
            <person name="Kawashima K."/>
            <person name="Kimura T."/>
            <person name="Kishida Y."/>
            <person name="Kiyokawa C."/>
            <person name="Kohara M."/>
            <person name="Matsumoto M."/>
            <person name="Matsuno A."/>
            <person name="Mochizuki Y."/>
            <person name="Nakayama S."/>
            <person name="Nakazaki N."/>
            <person name="Shimpo S."/>
            <person name="Sugimoto M."/>
            <person name="Takeuchi C."/>
            <person name="Yamada M."/>
            <person name="Tabata S."/>
        </authorList>
    </citation>
    <scope>NUCLEOTIDE SEQUENCE [LARGE SCALE GENOMIC DNA]</scope>
    <source>
        <strain>LMG 29417 / CECT 9101 / MAFF 303099</strain>
    </source>
</reference>
<dbReference type="EC" id="7.6.2.7" evidence="1"/>
<dbReference type="EMBL" id="BA000012">
    <property type="protein sequence ID" value="BAB51154.1"/>
    <property type="molecule type" value="Genomic_DNA"/>
</dbReference>
<dbReference type="RefSeq" id="WP_010912496.1">
    <property type="nucleotide sequence ID" value="NC_002678.2"/>
</dbReference>
<dbReference type="SMR" id="Q98DW6"/>
<dbReference type="KEGG" id="mlo:mlr4518"/>
<dbReference type="PATRIC" id="fig|266835.9.peg.3567"/>
<dbReference type="eggNOG" id="COG4525">
    <property type="taxonomic scope" value="Bacteria"/>
</dbReference>
<dbReference type="HOGENOM" id="CLU_000604_1_22_5"/>
<dbReference type="Proteomes" id="UP000000552">
    <property type="component" value="Chromosome"/>
</dbReference>
<dbReference type="GO" id="GO:0005886">
    <property type="term" value="C:plasma membrane"/>
    <property type="evidence" value="ECO:0007669"/>
    <property type="project" value="UniProtKB-SubCell"/>
</dbReference>
<dbReference type="GO" id="GO:0015411">
    <property type="term" value="F:ABC-type taurine transporter transporter activity"/>
    <property type="evidence" value="ECO:0007669"/>
    <property type="project" value="UniProtKB-EC"/>
</dbReference>
<dbReference type="GO" id="GO:0005524">
    <property type="term" value="F:ATP binding"/>
    <property type="evidence" value="ECO:0007669"/>
    <property type="project" value="UniProtKB-KW"/>
</dbReference>
<dbReference type="GO" id="GO:0016887">
    <property type="term" value="F:ATP hydrolysis activity"/>
    <property type="evidence" value="ECO:0007669"/>
    <property type="project" value="InterPro"/>
</dbReference>
<dbReference type="CDD" id="cd03293">
    <property type="entry name" value="ABC_NrtD_SsuB_transporters"/>
    <property type="match status" value="1"/>
</dbReference>
<dbReference type="Gene3D" id="3.40.50.300">
    <property type="entry name" value="P-loop containing nucleotide triphosphate hydrolases"/>
    <property type="match status" value="1"/>
</dbReference>
<dbReference type="InterPro" id="IPR003593">
    <property type="entry name" value="AAA+_ATPase"/>
</dbReference>
<dbReference type="InterPro" id="IPR003439">
    <property type="entry name" value="ABC_transporter-like_ATP-bd"/>
</dbReference>
<dbReference type="InterPro" id="IPR017871">
    <property type="entry name" value="ABC_transporter-like_CS"/>
</dbReference>
<dbReference type="InterPro" id="IPR050166">
    <property type="entry name" value="ABC_transporter_ATP-bind"/>
</dbReference>
<dbReference type="InterPro" id="IPR027417">
    <property type="entry name" value="P-loop_NTPase"/>
</dbReference>
<dbReference type="PANTHER" id="PTHR42788:SF18">
    <property type="entry name" value="TAURINE IMPORT ATP-BINDING PROTEIN TAUB"/>
    <property type="match status" value="1"/>
</dbReference>
<dbReference type="PANTHER" id="PTHR42788">
    <property type="entry name" value="TAURINE IMPORT ATP-BINDING PROTEIN-RELATED"/>
    <property type="match status" value="1"/>
</dbReference>
<dbReference type="Pfam" id="PF00005">
    <property type="entry name" value="ABC_tran"/>
    <property type="match status" value="1"/>
</dbReference>
<dbReference type="SMART" id="SM00382">
    <property type="entry name" value="AAA"/>
    <property type="match status" value="1"/>
</dbReference>
<dbReference type="SUPFAM" id="SSF52540">
    <property type="entry name" value="P-loop containing nucleoside triphosphate hydrolases"/>
    <property type="match status" value="1"/>
</dbReference>
<dbReference type="PROSITE" id="PS00211">
    <property type="entry name" value="ABC_TRANSPORTER_1"/>
    <property type="match status" value="1"/>
</dbReference>
<dbReference type="PROSITE" id="PS50893">
    <property type="entry name" value="ABC_TRANSPORTER_2"/>
    <property type="match status" value="1"/>
</dbReference>
<dbReference type="PROSITE" id="PS51250">
    <property type="entry name" value="TAUB"/>
    <property type="match status" value="1"/>
</dbReference>
<evidence type="ECO:0000255" key="1">
    <source>
        <dbReference type="HAMAP-Rule" id="MF_01714"/>
    </source>
</evidence>